<reference key="1">
    <citation type="journal article" date="2008" name="Antimicrob. Agents Chemother.">
        <title>Whole-genome pyrosequencing of an epidemic multidrug-resistant Acinetobacter baumannii strain belonging to the European clone II group.</title>
        <authorList>
            <person name="Iacono M."/>
            <person name="Villa L."/>
            <person name="Fortini D."/>
            <person name="Bordoni R."/>
            <person name="Imperi F."/>
            <person name="Bonnal R.J."/>
            <person name="Sicheritz-Ponten T."/>
            <person name="De Bellis G."/>
            <person name="Visca P."/>
            <person name="Cassone A."/>
            <person name="Carattoli A."/>
        </authorList>
    </citation>
    <scope>NUCLEOTIDE SEQUENCE [LARGE SCALE GENOMIC DNA]</scope>
    <source>
        <strain>ACICU</strain>
    </source>
</reference>
<protein>
    <recommendedName>
        <fullName evidence="1">Ubiquinone biosynthesis O-methyltransferase</fullName>
    </recommendedName>
    <alternativeName>
        <fullName evidence="1">2-polyprenyl-6-hydroxyphenol methylase</fullName>
        <ecNumber evidence="1">2.1.1.222</ecNumber>
    </alternativeName>
    <alternativeName>
        <fullName evidence="1">3-demethylubiquinone 3-O-methyltransferase</fullName>
        <ecNumber evidence="1">2.1.1.64</ecNumber>
    </alternativeName>
</protein>
<accession>B2I023</accession>
<feature type="chain" id="PRO_1000199664" description="Ubiquinone biosynthesis O-methyltransferase">
    <location>
        <begin position="1"/>
        <end position="237"/>
    </location>
</feature>
<feature type="binding site" evidence="1">
    <location>
        <position position="38"/>
    </location>
    <ligand>
        <name>S-adenosyl-L-methionine</name>
        <dbReference type="ChEBI" id="CHEBI:59789"/>
    </ligand>
</feature>
<feature type="binding site" evidence="1">
    <location>
        <position position="58"/>
    </location>
    <ligand>
        <name>S-adenosyl-L-methionine</name>
        <dbReference type="ChEBI" id="CHEBI:59789"/>
    </ligand>
</feature>
<feature type="binding site" evidence="1">
    <location>
        <position position="79"/>
    </location>
    <ligand>
        <name>S-adenosyl-L-methionine</name>
        <dbReference type="ChEBI" id="CHEBI:59789"/>
    </ligand>
</feature>
<feature type="binding site" evidence="1">
    <location>
        <position position="124"/>
    </location>
    <ligand>
        <name>S-adenosyl-L-methionine</name>
        <dbReference type="ChEBI" id="CHEBI:59789"/>
    </ligand>
</feature>
<evidence type="ECO:0000255" key="1">
    <source>
        <dbReference type="HAMAP-Rule" id="MF_00472"/>
    </source>
</evidence>
<sequence>MSQLNVDLQEIAKFEALAAKWWDQHSEFRPLHQINPLRLNWIDERAGGLAGKKVLDVGCGGGILAESMARRGADVLGIDMGEAPLAIGRLHAQQENVQNIEYRQIPVEELAQEQAGQYDVVTCMEMMEHVPDPASIVKACQTLVKPGGHVFFSTINRNPKSYLFAIIGAEYVLRMLPKGTHDYHKFIRPSEMAHDIRNAGLTLKEMTGLHYNPITKRYWLAPNVDVNYMVHTIKTGV</sequence>
<proteinExistence type="inferred from homology"/>
<organism>
    <name type="scientific">Acinetobacter baumannii (strain ACICU)</name>
    <dbReference type="NCBI Taxonomy" id="405416"/>
    <lineage>
        <taxon>Bacteria</taxon>
        <taxon>Pseudomonadati</taxon>
        <taxon>Pseudomonadota</taxon>
        <taxon>Gammaproteobacteria</taxon>
        <taxon>Moraxellales</taxon>
        <taxon>Moraxellaceae</taxon>
        <taxon>Acinetobacter</taxon>
        <taxon>Acinetobacter calcoaceticus/baumannii complex</taxon>
    </lineage>
</organism>
<keyword id="KW-0489">Methyltransferase</keyword>
<keyword id="KW-0949">S-adenosyl-L-methionine</keyword>
<keyword id="KW-0808">Transferase</keyword>
<keyword id="KW-0831">Ubiquinone biosynthesis</keyword>
<dbReference type="EC" id="2.1.1.222" evidence="1"/>
<dbReference type="EC" id="2.1.1.64" evidence="1"/>
<dbReference type="EMBL" id="CP000863">
    <property type="protein sequence ID" value="ACC55369.1"/>
    <property type="molecule type" value="Genomic_DNA"/>
</dbReference>
<dbReference type="RefSeq" id="WP_000080753.1">
    <property type="nucleotide sequence ID" value="NZ_CP031380.1"/>
</dbReference>
<dbReference type="SMR" id="B2I023"/>
<dbReference type="KEGG" id="abc:ACICU_00057"/>
<dbReference type="HOGENOM" id="CLU_042432_5_0_6"/>
<dbReference type="UniPathway" id="UPA00232"/>
<dbReference type="Proteomes" id="UP000008839">
    <property type="component" value="Chromosome"/>
</dbReference>
<dbReference type="GO" id="GO:0102208">
    <property type="term" value="F:2-polyprenyl-6-hydroxyphenol methylase activity"/>
    <property type="evidence" value="ECO:0007669"/>
    <property type="project" value="UniProtKB-EC"/>
</dbReference>
<dbReference type="GO" id="GO:0061542">
    <property type="term" value="F:3-demethylubiquinol 3-O-methyltransferase activity"/>
    <property type="evidence" value="ECO:0007669"/>
    <property type="project" value="UniProtKB-UniRule"/>
</dbReference>
<dbReference type="GO" id="GO:0010420">
    <property type="term" value="F:polyprenyldihydroxybenzoate methyltransferase activity"/>
    <property type="evidence" value="ECO:0007669"/>
    <property type="project" value="InterPro"/>
</dbReference>
<dbReference type="GO" id="GO:0032259">
    <property type="term" value="P:methylation"/>
    <property type="evidence" value="ECO:0007669"/>
    <property type="project" value="UniProtKB-KW"/>
</dbReference>
<dbReference type="CDD" id="cd02440">
    <property type="entry name" value="AdoMet_MTases"/>
    <property type="match status" value="1"/>
</dbReference>
<dbReference type="FunFam" id="3.40.50.150:FF:000028">
    <property type="entry name" value="Ubiquinone biosynthesis O-methyltransferase"/>
    <property type="match status" value="1"/>
</dbReference>
<dbReference type="Gene3D" id="3.40.50.150">
    <property type="entry name" value="Vaccinia Virus protein VP39"/>
    <property type="match status" value="1"/>
</dbReference>
<dbReference type="HAMAP" id="MF_00472">
    <property type="entry name" value="UbiG"/>
    <property type="match status" value="1"/>
</dbReference>
<dbReference type="InterPro" id="IPR029063">
    <property type="entry name" value="SAM-dependent_MTases_sf"/>
</dbReference>
<dbReference type="InterPro" id="IPR010233">
    <property type="entry name" value="UbiG_MeTrfase"/>
</dbReference>
<dbReference type="NCBIfam" id="TIGR01983">
    <property type="entry name" value="UbiG"/>
    <property type="match status" value="1"/>
</dbReference>
<dbReference type="PANTHER" id="PTHR43464">
    <property type="entry name" value="METHYLTRANSFERASE"/>
    <property type="match status" value="1"/>
</dbReference>
<dbReference type="PANTHER" id="PTHR43464:SF19">
    <property type="entry name" value="UBIQUINONE BIOSYNTHESIS O-METHYLTRANSFERASE, MITOCHONDRIAL"/>
    <property type="match status" value="1"/>
</dbReference>
<dbReference type="Pfam" id="PF13489">
    <property type="entry name" value="Methyltransf_23"/>
    <property type="match status" value="1"/>
</dbReference>
<dbReference type="SUPFAM" id="SSF53335">
    <property type="entry name" value="S-adenosyl-L-methionine-dependent methyltransferases"/>
    <property type="match status" value="1"/>
</dbReference>
<name>UBIG_ACIBC</name>
<comment type="function">
    <text evidence="1">O-methyltransferase that catalyzes the 2 O-methylation steps in the ubiquinone biosynthetic pathway.</text>
</comment>
<comment type="catalytic activity">
    <reaction evidence="1">
        <text>a 3-demethylubiquinol + S-adenosyl-L-methionine = a ubiquinol + S-adenosyl-L-homocysteine + H(+)</text>
        <dbReference type="Rhea" id="RHEA:44380"/>
        <dbReference type="Rhea" id="RHEA-COMP:9566"/>
        <dbReference type="Rhea" id="RHEA-COMP:10914"/>
        <dbReference type="ChEBI" id="CHEBI:15378"/>
        <dbReference type="ChEBI" id="CHEBI:17976"/>
        <dbReference type="ChEBI" id="CHEBI:57856"/>
        <dbReference type="ChEBI" id="CHEBI:59789"/>
        <dbReference type="ChEBI" id="CHEBI:84422"/>
        <dbReference type="EC" id="2.1.1.64"/>
    </reaction>
</comment>
<comment type="catalytic activity">
    <reaction evidence="1">
        <text>a 3-(all-trans-polyprenyl)benzene-1,2-diol + S-adenosyl-L-methionine = a 2-methoxy-6-(all-trans-polyprenyl)phenol + S-adenosyl-L-homocysteine + H(+)</text>
        <dbReference type="Rhea" id="RHEA:31411"/>
        <dbReference type="Rhea" id="RHEA-COMP:9550"/>
        <dbReference type="Rhea" id="RHEA-COMP:9551"/>
        <dbReference type="ChEBI" id="CHEBI:15378"/>
        <dbReference type="ChEBI" id="CHEBI:57856"/>
        <dbReference type="ChEBI" id="CHEBI:59789"/>
        <dbReference type="ChEBI" id="CHEBI:62729"/>
        <dbReference type="ChEBI" id="CHEBI:62731"/>
        <dbReference type="EC" id="2.1.1.222"/>
    </reaction>
</comment>
<comment type="pathway">
    <text evidence="1">Cofactor biosynthesis; ubiquinone biosynthesis.</text>
</comment>
<comment type="similarity">
    <text evidence="1">Belongs to the methyltransferase superfamily. UbiG/COQ3 family.</text>
</comment>
<gene>
    <name evidence="1" type="primary">ubiG</name>
    <name type="ordered locus">ACICU_00057</name>
</gene>